<organism>
    <name type="scientific">Magnetococcus marinus (strain ATCC BAA-1437 / JCM 17883 / MC-1)</name>
    <dbReference type="NCBI Taxonomy" id="156889"/>
    <lineage>
        <taxon>Bacteria</taxon>
        <taxon>Pseudomonadati</taxon>
        <taxon>Pseudomonadota</taxon>
        <taxon>Alphaproteobacteria</taxon>
        <taxon>Magnetococcales</taxon>
        <taxon>Magnetococcaceae</taxon>
        <taxon>Magnetococcus</taxon>
    </lineage>
</organism>
<gene>
    <name evidence="1" type="primary">rpsP</name>
    <name type="ordered locus">Mmc1_0504</name>
</gene>
<protein>
    <recommendedName>
        <fullName evidence="1">Small ribosomal subunit protein bS16</fullName>
    </recommendedName>
    <alternativeName>
        <fullName evidence="2">30S ribosomal protein S16</fullName>
    </alternativeName>
</protein>
<comment type="similarity">
    <text evidence="1">Belongs to the bacterial ribosomal protein bS16 family.</text>
</comment>
<keyword id="KW-1185">Reference proteome</keyword>
<keyword id="KW-0687">Ribonucleoprotein</keyword>
<keyword id="KW-0689">Ribosomal protein</keyword>
<accession>A0L4Y6</accession>
<feature type="chain" id="PRO_1000049285" description="Small ribosomal subunit protein bS16">
    <location>
        <begin position="1"/>
        <end position="83"/>
    </location>
</feature>
<dbReference type="EMBL" id="CP000471">
    <property type="protein sequence ID" value="ABK43029.1"/>
    <property type="molecule type" value="Genomic_DNA"/>
</dbReference>
<dbReference type="RefSeq" id="WP_011712196.1">
    <property type="nucleotide sequence ID" value="NC_008576.1"/>
</dbReference>
<dbReference type="SMR" id="A0L4Y6"/>
<dbReference type="STRING" id="156889.Mmc1_0504"/>
<dbReference type="KEGG" id="mgm:Mmc1_0504"/>
<dbReference type="eggNOG" id="COG0228">
    <property type="taxonomic scope" value="Bacteria"/>
</dbReference>
<dbReference type="HOGENOM" id="CLU_100590_5_0_5"/>
<dbReference type="OrthoDB" id="9807878at2"/>
<dbReference type="Proteomes" id="UP000002586">
    <property type="component" value="Chromosome"/>
</dbReference>
<dbReference type="GO" id="GO:0005737">
    <property type="term" value="C:cytoplasm"/>
    <property type="evidence" value="ECO:0007669"/>
    <property type="project" value="UniProtKB-ARBA"/>
</dbReference>
<dbReference type="GO" id="GO:0015935">
    <property type="term" value="C:small ribosomal subunit"/>
    <property type="evidence" value="ECO:0007669"/>
    <property type="project" value="TreeGrafter"/>
</dbReference>
<dbReference type="GO" id="GO:0003735">
    <property type="term" value="F:structural constituent of ribosome"/>
    <property type="evidence" value="ECO:0007669"/>
    <property type="project" value="InterPro"/>
</dbReference>
<dbReference type="GO" id="GO:0006412">
    <property type="term" value="P:translation"/>
    <property type="evidence" value="ECO:0007669"/>
    <property type="project" value="UniProtKB-UniRule"/>
</dbReference>
<dbReference type="Gene3D" id="3.30.1320.10">
    <property type="match status" value="1"/>
</dbReference>
<dbReference type="HAMAP" id="MF_00385">
    <property type="entry name" value="Ribosomal_bS16"/>
    <property type="match status" value="1"/>
</dbReference>
<dbReference type="InterPro" id="IPR000307">
    <property type="entry name" value="Ribosomal_bS16"/>
</dbReference>
<dbReference type="InterPro" id="IPR020592">
    <property type="entry name" value="Ribosomal_bS16_CS"/>
</dbReference>
<dbReference type="InterPro" id="IPR023803">
    <property type="entry name" value="Ribosomal_bS16_dom_sf"/>
</dbReference>
<dbReference type="NCBIfam" id="TIGR00002">
    <property type="entry name" value="S16"/>
    <property type="match status" value="1"/>
</dbReference>
<dbReference type="PANTHER" id="PTHR12919">
    <property type="entry name" value="30S RIBOSOMAL PROTEIN S16"/>
    <property type="match status" value="1"/>
</dbReference>
<dbReference type="PANTHER" id="PTHR12919:SF20">
    <property type="entry name" value="SMALL RIBOSOMAL SUBUNIT PROTEIN BS16M"/>
    <property type="match status" value="1"/>
</dbReference>
<dbReference type="Pfam" id="PF00886">
    <property type="entry name" value="Ribosomal_S16"/>
    <property type="match status" value="1"/>
</dbReference>
<dbReference type="SUPFAM" id="SSF54565">
    <property type="entry name" value="Ribosomal protein S16"/>
    <property type="match status" value="1"/>
</dbReference>
<dbReference type="PROSITE" id="PS00732">
    <property type="entry name" value="RIBOSOMAL_S16"/>
    <property type="match status" value="1"/>
</dbReference>
<reference key="1">
    <citation type="journal article" date="2009" name="Appl. Environ. Microbiol.">
        <title>Complete genome sequence of the chemolithoautotrophic marine magnetotactic coccus strain MC-1.</title>
        <authorList>
            <person name="Schubbe S."/>
            <person name="Williams T.J."/>
            <person name="Xie G."/>
            <person name="Kiss H.E."/>
            <person name="Brettin T.S."/>
            <person name="Martinez D."/>
            <person name="Ross C.A."/>
            <person name="Schuler D."/>
            <person name="Cox B.L."/>
            <person name="Nealson K.H."/>
            <person name="Bazylinski D.A."/>
        </authorList>
    </citation>
    <scope>NUCLEOTIDE SEQUENCE [LARGE SCALE GENOMIC DNA]</scope>
    <source>
        <strain>ATCC BAA-1437 / JCM 17883 / MC-1</strain>
    </source>
</reference>
<proteinExistence type="inferred from homology"/>
<name>RS16_MAGMM</name>
<sequence length="83" mass="9178">MAVCIRLARGGKKKKPVYSVVVADKRMARDGRFLEKLGQYIPMKEGGTFAINQERYAHWISQGAKPSETVGKLVAKQQNAAEA</sequence>
<evidence type="ECO:0000255" key="1">
    <source>
        <dbReference type="HAMAP-Rule" id="MF_00385"/>
    </source>
</evidence>
<evidence type="ECO:0000305" key="2"/>